<name>GPMA_CAUVN</name>
<gene>
    <name evidence="1" type="primary">gpmA</name>
    <name type="ordered locus">CCNA_02344</name>
</gene>
<proteinExistence type="inferred from homology"/>
<keyword id="KW-0312">Gluconeogenesis</keyword>
<keyword id="KW-0324">Glycolysis</keyword>
<keyword id="KW-0413">Isomerase</keyword>
<keyword id="KW-1185">Reference proteome</keyword>
<feature type="chain" id="PRO_1000149509" description="2,3-bisphosphoglycerate-dependent phosphoglycerate mutase">
    <location>
        <begin position="1"/>
        <end position="237"/>
    </location>
</feature>
<feature type="active site" description="Tele-phosphohistidine intermediate" evidence="1">
    <location>
        <position position="9"/>
    </location>
</feature>
<feature type="active site" description="Proton donor/acceptor" evidence="1">
    <location>
        <position position="87"/>
    </location>
</feature>
<feature type="binding site" evidence="1">
    <location>
        <begin position="8"/>
        <end position="15"/>
    </location>
    <ligand>
        <name>substrate</name>
    </ligand>
</feature>
<feature type="binding site" evidence="1">
    <location>
        <begin position="21"/>
        <end position="22"/>
    </location>
    <ligand>
        <name>substrate</name>
    </ligand>
</feature>
<feature type="binding site" evidence="1">
    <location>
        <position position="60"/>
    </location>
    <ligand>
        <name>substrate</name>
    </ligand>
</feature>
<feature type="binding site" evidence="1">
    <location>
        <begin position="87"/>
        <end position="90"/>
    </location>
    <ligand>
        <name>substrate</name>
    </ligand>
</feature>
<feature type="binding site" evidence="1">
    <location>
        <position position="98"/>
    </location>
    <ligand>
        <name>substrate</name>
    </ligand>
</feature>
<feature type="binding site" evidence="1">
    <location>
        <begin position="114"/>
        <end position="115"/>
    </location>
    <ligand>
        <name>substrate</name>
    </ligand>
</feature>
<feature type="binding site" evidence="1">
    <location>
        <begin position="180"/>
        <end position="181"/>
    </location>
    <ligand>
        <name>substrate</name>
    </ligand>
</feature>
<feature type="site" description="Transition state stabilizer" evidence="1">
    <location>
        <position position="179"/>
    </location>
</feature>
<sequence>MPTLVLLRHGQSQWNLENRFTGWVDVDLTAEGEAQARKGGELIAAAGIEIDRLFTSVQTRAIRTGNLALDAAKQSFVPVTKDWRLNERHYGGLTGLNKAETAEKHGVEQVTIWRRSYDIPPPELAPGGEYDFSKDRRYKGASLPSTESLATTLVRVLPYWESDIAPHLKAGETVLIAAHGNSLRAIVKHLFNVPDDQIVGVEIPTGNPLVIDLDAALKPTGARYLDDSRAEALPKVG</sequence>
<organism>
    <name type="scientific">Caulobacter vibrioides (strain NA1000 / CB15N)</name>
    <name type="common">Caulobacter crescentus</name>
    <dbReference type="NCBI Taxonomy" id="565050"/>
    <lineage>
        <taxon>Bacteria</taxon>
        <taxon>Pseudomonadati</taxon>
        <taxon>Pseudomonadota</taxon>
        <taxon>Alphaproteobacteria</taxon>
        <taxon>Caulobacterales</taxon>
        <taxon>Caulobacteraceae</taxon>
        <taxon>Caulobacter</taxon>
    </lineage>
</organism>
<reference key="1">
    <citation type="journal article" date="2010" name="J. Bacteriol.">
        <title>The genetic basis of laboratory adaptation in Caulobacter crescentus.</title>
        <authorList>
            <person name="Marks M.E."/>
            <person name="Castro-Rojas C.M."/>
            <person name="Teiling C."/>
            <person name="Du L."/>
            <person name="Kapatral V."/>
            <person name="Walunas T.L."/>
            <person name="Crosson S."/>
        </authorList>
    </citation>
    <scope>NUCLEOTIDE SEQUENCE [LARGE SCALE GENOMIC DNA]</scope>
    <source>
        <strain>NA1000 / CB15N</strain>
    </source>
</reference>
<protein>
    <recommendedName>
        <fullName evidence="1">2,3-bisphosphoglycerate-dependent phosphoglycerate mutase</fullName>
        <shortName evidence="1">BPG-dependent PGAM</shortName>
        <shortName evidence="1">PGAM</shortName>
        <shortName evidence="1">Phosphoglyceromutase</shortName>
        <shortName evidence="1">dPGM</shortName>
        <ecNumber evidence="1">5.4.2.11</ecNumber>
    </recommendedName>
</protein>
<dbReference type="EC" id="5.4.2.11" evidence="1"/>
<dbReference type="EMBL" id="CP001340">
    <property type="protein sequence ID" value="ACL95809.1"/>
    <property type="molecule type" value="Genomic_DNA"/>
</dbReference>
<dbReference type="RefSeq" id="WP_010920122.1">
    <property type="nucleotide sequence ID" value="NC_011916.1"/>
</dbReference>
<dbReference type="RefSeq" id="YP_002517717.1">
    <property type="nucleotide sequence ID" value="NC_011916.1"/>
</dbReference>
<dbReference type="SMR" id="B8GYN6"/>
<dbReference type="GeneID" id="7332298"/>
<dbReference type="KEGG" id="ccs:CCNA_02344"/>
<dbReference type="PATRIC" id="fig|565050.3.peg.2296"/>
<dbReference type="HOGENOM" id="CLU_033323_1_1_5"/>
<dbReference type="OrthoDB" id="9781415at2"/>
<dbReference type="PhylomeDB" id="B8GYN6"/>
<dbReference type="UniPathway" id="UPA00109">
    <property type="reaction ID" value="UER00186"/>
</dbReference>
<dbReference type="Proteomes" id="UP000001364">
    <property type="component" value="Chromosome"/>
</dbReference>
<dbReference type="GO" id="GO:0004619">
    <property type="term" value="F:phosphoglycerate mutase activity"/>
    <property type="evidence" value="ECO:0007669"/>
    <property type="project" value="UniProtKB-EC"/>
</dbReference>
<dbReference type="GO" id="GO:0006094">
    <property type="term" value="P:gluconeogenesis"/>
    <property type="evidence" value="ECO:0007669"/>
    <property type="project" value="UniProtKB-UniRule"/>
</dbReference>
<dbReference type="GO" id="GO:0006096">
    <property type="term" value="P:glycolytic process"/>
    <property type="evidence" value="ECO:0007669"/>
    <property type="project" value="UniProtKB-UniRule"/>
</dbReference>
<dbReference type="CDD" id="cd07067">
    <property type="entry name" value="HP_PGM_like"/>
    <property type="match status" value="1"/>
</dbReference>
<dbReference type="FunFam" id="3.40.50.1240:FF:000003">
    <property type="entry name" value="2,3-bisphosphoglycerate-dependent phosphoglycerate mutase"/>
    <property type="match status" value="1"/>
</dbReference>
<dbReference type="Gene3D" id="3.40.50.1240">
    <property type="entry name" value="Phosphoglycerate mutase-like"/>
    <property type="match status" value="1"/>
</dbReference>
<dbReference type="HAMAP" id="MF_01039">
    <property type="entry name" value="PGAM_GpmA"/>
    <property type="match status" value="1"/>
</dbReference>
<dbReference type="InterPro" id="IPR013078">
    <property type="entry name" value="His_Pase_superF_clade-1"/>
</dbReference>
<dbReference type="InterPro" id="IPR029033">
    <property type="entry name" value="His_PPase_superfam"/>
</dbReference>
<dbReference type="InterPro" id="IPR001345">
    <property type="entry name" value="PG/BPGM_mutase_AS"/>
</dbReference>
<dbReference type="InterPro" id="IPR005952">
    <property type="entry name" value="Phosphogly_mut1"/>
</dbReference>
<dbReference type="NCBIfam" id="TIGR01258">
    <property type="entry name" value="pgm_1"/>
    <property type="match status" value="1"/>
</dbReference>
<dbReference type="NCBIfam" id="NF010713">
    <property type="entry name" value="PRK14115.1"/>
    <property type="match status" value="1"/>
</dbReference>
<dbReference type="PANTHER" id="PTHR11931">
    <property type="entry name" value="PHOSPHOGLYCERATE MUTASE"/>
    <property type="match status" value="1"/>
</dbReference>
<dbReference type="Pfam" id="PF00300">
    <property type="entry name" value="His_Phos_1"/>
    <property type="match status" value="1"/>
</dbReference>
<dbReference type="PIRSF" id="PIRSF000709">
    <property type="entry name" value="6PFK_2-Ptase"/>
    <property type="match status" value="1"/>
</dbReference>
<dbReference type="SMART" id="SM00855">
    <property type="entry name" value="PGAM"/>
    <property type="match status" value="1"/>
</dbReference>
<dbReference type="SUPFAM" id="SSF53254">
    <property type="entry name" value="Phosphoglycerate mutase-like"/>
    <property type="match status" value="1"/>
</dbReference>
<dbReference type="PROSITE" id="PS00175">
    <property type="entry name" value="PG_MUTASE"/>
    <property type="match status" value="1"/>
</dbReference>
<accession>B8GYN6</accession>
<comment type="function">
    <text evidence="1">Catalyzes the interconversion of 2-phosphoglycerate and 3-phosphoglycerate.</text>
</comment>
<comment type="catalytic activity">
    <reaction evidence="1">
        <text>(2R)-2-phosphoglycerate = (2R)-3-phosphoglycerate</text>
        <dbReference type="Rhea" id="RHEA:15901"/>
        <dbReference type="ChEBI" id="CHEBI:58272"/>
        <dbReference type="ChEBI" id="CHEBI:58289"/>
        <dbReference type="EC" id="5.4.2.11"/>
    </reaction>
</comment>
<comment type="pathway">
    <text evidence="1">Carbohydrate degradation; glycolysis; pyruvate from D-glyceraldehyde 3-phosphate: step 3/5.</text>
</comment>
<comment type="subunit">
    <text evidence="1">Homodimer.</text>
</comment>
<comment type="similarity">
    <text evidence="1">Belongs to the phosphoglycerate mutase family. BPG-dependent PGAM subfamily.</text>
</comment>
<evidence type="ECO:0000255" key="1">
    <source>
        <dbReference type="HAMAP-Rule" id="MF_01039"/>
    </source>
</evidence>